<keyword id="KW-0158">Chromosome</keyword>
<keyword id="KW-0238">DNA-binding</keyword>
<keyword id="KW-0479">Metal-binding</keyword>
<keyword id="KW-0539">Nucleus</keyword>
<keyword id="KW-1267">Proteomics identification</keyword>
<keyword id="KW-1185">Reference proteome</keyword>
<keyword id="KW-0677">Repeat</keyword>
<keyword id="KW-0779">Telomere</keyword>
<keyword id="KW-0804">Transcription</keyword>
<keyword id="KW-0805">Transcription regulation</keyword>
<keyword id="KW-0862">Zinc</keyword>
<keyword id="KW-0863">Zinc-finger</keyword>
<feature type="chain" id="PRO_0000047751" description="Zinc finger and SCAN domain-containing protein 4">
    <location>
        <begin position="1"/>
        <end position="433"/>
    </location>
</feature>
<feature type="domain" description="SCAN box" evidence="3">
    <location>
        <begin position="44"/>
        <end position="126"/>
    </location>
</feature>
<feature type="zinc finger region" description="C2H2-type 1" evidence="2">
    <location>
        <begin position="312"/>
        <end position="334"/>
    </location>
</feature>
<feature type="zinc finger region" description="C2H2-type 2" evidence="2">
    <location>
        <begin position="340"/>
        <end position="362"/>
    </location>
</feature>
<feature type="zinc finger region" description="C2H2-type 3" evidence="2">
    <location>
        <begin position="368"/>
        <end position="390"/>
    </location>
</feature>
<feature type="zinc finger region" description="C2H2-type 4" evidence="2">
    <location>
        <begin position="396"/>
        <end position="418"/>
    </location>
</feature>
<feature type="region of interest" description="Disordered" evidence="4">
    <location>
        <begin position="165"/>
        <end position="210"/>
    </location>
</feature>
<feature type="region of interest" description="Disordered" evidence="4">
    <location>
        <begin position="275"/>
        <end position="301"/>
    </location>
</feature>
<feature type="compositionally biased region" description="Polar residues" evidence="4">
    <location>
        <begin position="165"/>
        <end position="185"/>
    </location>
</feature>
<feature type="compositionally biased region" description="Polar residues" evidence="4">
    <location>
        <begin position="195"/>
        <end position="210"/>
    </location>
</feature>
<feature type="compositionally biased region" description="Polar residues" evidence="4">
    <location>
        <begin position="277"/>
        <end position="299"/>
    </location>
</feature>
<feature type="sequence variant" id="VAR_052926" description="In dbSNP:rs11668570.">
    <original>E</original>
    <variation>K</variation>
    <location>
        <position position="387"/>
    </location>
</feature>
<sequence length="433" mass="48957">MALDLRTIFQCEPSENNLGSENSAFQQSQGPAVQREEGISEFSRMVLNSFQDSNNSYARQELQRLYRIFHSWLQPEKHSKDEIISLLVLEQFMIGGHCNDKASVKEKWKSSGKNLERFIEDLTDDSINPPALVHVHMQGQEALFSEDMPLRDVIVHLTKQVNAQTTREANMGTPSQTSQDTSLETGQGYEDEQDGWNSSSKTTRVNENITNQGNQIVSLIIIQEENGPRPEEGGVSSDNPYNSKRAELVTARSQEGSINGITFQGVPMVMGAGCISQPEQSSPESALTHQSNEGNSTCEVHQKGSHGVQKSYKCEECPKVFKYLCHLLAHQRRHRNERPFVCPECQKGFFQISDLRVHQIIHTGKKPFTCSMCKKSFSHKTNLRSHERIHTGEKPYTCPFCKTSYRQSSTYHRHMRTHEKITLPSVPSTPEAS</sequence>
<protein>
    <recommendedName>
        <fullName>Zinc finger and SCAN domain-containing protein 4</fullName>
    </recommendedName>
    <alternativeName>
        <fullName>Zinc finger protein 494</fullName>
    </alternativeName>
</protein>
<evidence type="ECO:0000250" key="1"/>
<evidence type="ECO:0000255" key="2">
    <source>
        <dbReference type="PROSITE-ProRule" id="PRU00042"/>
    </source>
</evidence>
<evidence type="ECO:0000255" key="3">
    <source>
        <dbReference type="PROSITE-ProRule" id="PRU00187"/>
    </source>
</evidence>
<evidence type="ECO:0000256" key="4">
    <source>
        <dbReference type="SAM" id="MobiDB-lite"/>
    </source>
</evidence>
<proteinExistence type="evidence at protein level"/>
<dbReference type="EMBL" id="AK092424">
    <property type="protein sequence ID" value="BAC03886.1"/>
    <property type="molecule type" value="mRNA"/>
</dbReference>
<dbReference type="EMBL" id="BC101738">
    <property type="protein sequence ID" value="AAI01739.1"/>
    <property type="molecule type" value="mRNA"/>
</dbReference>
<dbReference type="EMBL" id="BC101740">
    <property type="protein sequence ID" value="AAI01741.1"/>
    <property type="molecule type" value="mRNA"/>
</dbReference>
<dbReference type="CCDS" id="CCDS12958.1"/>
<dbReference type="RefSeq" id="NP_001371762.1">
    <property type="nucleotide sequence ID" value="NM_001384833.1"/>
</dbReference>
<dbReference type="RefSeq" id="NP_689890.1">
    <property type="nucleotide sequence ID" value="NM_152677.4"/>
</dbReference>
<dbReference type="RefSeq" id="XP_011524909.1">
    <property type="nucleotide sequence ID" value="XM_011526607.2"/>
</dbReference>
<dbReference type="RefSeq" id="XP_016881947.1">
    <property type="nucleotide sequence ID" value="XM_017026458.1"/>
</dbReference>
<dbReference type="RefSeq" id="XP_054176155.1">
    <property type="nucleotide sequence ID" value="XM_054320180.1"/>
</dbReference>
<dbReference type="SMR" id="Q8NAM6"/>
<dbReference type="BioGRID" id="128392">
    <property type="interactions" value="16"/>
</dbReference>
<dbReference type="FunCoup" id="Q8NAM6">
    <property type="interactions" value="3"/>
</dbReference>
<dbReference type="IntAct" id="Q8NAM6">
    <property type="interactions" value="13"/>
</dbReference>
<dbReference type="MINT" id="Q8NAM6"/>
<dbReference type="STRING" id="9606.ENSP00000321963"/>
<dbReference type="iPTMnet" id="Q8NAM6"/>
<dbReference type="PhosphoSitePlus" id="Q8NAM6"/>
<dbReference type="BioMuta" id="ZSCAN4"/>
<dbReference type="DMDM" id="55976744"/>
<dbReference type="jPOST" id="Q8NAM6"/>
<dbReference type="MassIVE" id="Q8NAM6"/>
<dbReference type="PaxDb" id="9606-ENSP00000321963"/>
<dbReference type="PeptideAtlas" id="Q8NAM6"/>
<dbReference type="ProteomicsDB" id="72681"/>
<dbReference type="Antibodypedia" id="33279">
    <property type="antibodies" value="327 antibodies from 26 providers"/>
</dbReference>
<dbReference type="DNASU" id="201516"/>
<dbReference type="Ensembl" id="ENST00000318203.9">
    <property type="protein sequence ID" value="ENSP00000321963.4"/>
    <property type="gene ID" value="ENSG00000180532.12"/>
</dbReference>
<dbReference type="GeneID" id="201516"/>
<dbReference type="KEGG" id="hsa:201516"/>
<dbReference type="MANE-Select" id="ENST00000318203.9">
    <property type="protein sequence ID" value="ENSP00000321963.4"/>
    <property type="RefSeq nucleotide sequence ID" value="NM_152677.4"/>
    <property type="RefSeq protein sequence ID" value="NP_689890.1"/>
</dbReference>
<dbReference type="UCSC" id="uc002qpu.3">
    <property type="organism name" value="human"/>
</dbReference>
<dbReference type="AGR" id="HGNC:23709"/>
<dbReference type="CTD" id="201516"/>
<dbReference type="DisGeNET" id="201516"/>
<dbReference type="GeneCards" id="ZSCAN4"/>
<dbReference type="HGNC" id="HGNC:23709">
    <property type="gene designation" value="ZSCAN4"/>
</dbReference>
<dbReference type="HPA" id="ENSG00000180532">
    <property type="expression patterns" value="Tissue enhanced (stomach)"/>
</dbReference>
<dbReference type="MIM" id="613419">
    <property type="type" value="gene"/>
</dbReference>
<dbReference type="neXtProt" id="NX_Q8NAM6"/>
<dbReference type="OpenTargets" id="ENSG00000180532"/>
<dbReference type="PharmGKB" id="PA134878313"/>
<dbReference type="VEuPathDB" id="HostDB:ENSG00000180532"/>
<dbReference type="eggNOG" id="KOG1721">
    <property type="taxonomic scope" value="Eukaryota"/>
</dbReference>
<dbReference type="GeneTree" id="ENSGT00940000164210"/>
<dbReference type="HOGENOM" id="CLU_002678_49_10_1"/>
<dbReference type="InParanoid" id="Q8NAM6"/>
<dbReference type="OMA" id="HEKITPP"/>
<dbReference type="OrthoDB" id="8922241at2759"/>
<dbReference type="PAN-GO" id="Q8NAM6">
    <property type="GO annotations" value="3 GO annotations based on evolutionary models"/>
</dbReference>
<dbReference type="PhylomeDB" id="Q8NAM6"/>
<dbReference type="TreeFam" id="TF337216"/>
<dbReference type="PathwayCommons" id="Q8NAM6"/>
<dbReference type="Reactome" id="R-HSA-9819196">
    <property type="pathway name" value="Zygotic genome activation (ZGA)"/>
</dbReference>
<dbReference type="SignaLink" id="Q8NAM6"/>
<dbReference type="BioGRID-ORCS" id="201516">
    <property type="hits" value="19 hits in 1166 CRISPR screens"/>
</dbReference>
<dbReference type="ChiTaRS" id="ZSCAN4">
    <property type="organism name" value="human"/>
</dbReference>
<dbReference type="GenomeRNAi" id="201516"/>
<dbReference type="Pharos" id="Q8NAM6">
    <property type="development level" value="Tbio"/>
</dbReference>
<dbReference type="PRO" id="PR:Q8NAM6"/>
<dbReference type="Proteomes" id="UP000005640">
    <property type="component" value="Chromosome 19"/>
</dbReference>
<dbReference type="RNAct" id="Q8NAM6">
    <property type="molecule type" value="protein"/>
</dbReference>
<dbReference type="Bgee" id="ENSG00000180532">
    <property type="expression patterns" value="Expressed in placenta and 64 other cell types or tissues"/>
</dbReference>
<dbReference type="GO" id="GO:0000781">
    <property type="term" value="C:chromosome, telomeric region"/>
    <property type="evidence" value="ECO:0000250"/>
    <property type="project" value="UniProtKB"/>
</dbReference>
<dbReference type="GO" id="GO:0005634">
    <property type="term" value="C:nucleus"/>
    <property type="evidence" value="ECO:0007669"/>
    <property type="project" value="UniProtKB-SubCell"/>
</dbReference>
<dbReference type="GO" id="GO:0000981">
    <property type="term" value="F:DNA-binding transcription factor activity, RNA polymerase II-specific"/>
    <property type="evidence" value="ECO:0000318"/>
    <property type="project" value="GO_Central"/>
</dbReference>
<dbReference type="GO" id="GO:0000978">
    <property type="term" value="F:RNA polymerase II cis-regulatory region sequence-specific DNA binding"/>
    <property type="evidence" value="ECO:0000318"/>
    <property type="project" value="GO_Central"/>
</dbReference>
<dbReference type="GO" id="GO:1990837">
    <property type="term" value="F:sequence-specific double-stranded DNA binding"/>
    <property type="evidence" value="ECO:0000314"/>
    <property type="project" value="ARUK-UCL"/>
</dbReference>
<dbReference type="GO" id="GO:0008270">
    <property type="term" value="F:zinc ion binding"/>
    <property type="evidence" value="ECO:0007669"/>
    <property type="project" value="UniProtKB-KW"/>
</dbReference>
<dbReference type="GO" id="GO:0045950">
    <property type="term" value="P:negative regulation of mitotic recombination"/>
    <property type="evidence" value="ECO:0000250"/>
    <property type="project" value="BHF-UCL"/>
</dbReference>
<dbReference type="GO" id="GO:0006357">
    <property type="term" value="P:regulation of transcription by RNA polymerase II"/>
    <property type="evidence" value="ECO:0000318"/>
    <property type="project" value="GO_Central"/>
</dbReference>
<dbReference type="GO" id="GO:0010833">
    <property type="term" value="P:telomere maintenance via telomere lengthening"/>
    <property type="evidence" value="ECO:0000250"/>
    <property type="project" value="UniProtKB"/>
</dbReference>
<dbReference type="CDD" id="cd07936">
    <property type="entry name" value="SCAN"/>
    <property type="match status" value="1"/>
</dbReference>
<dbReference type="FunFam" id="1.10.4020.10:FF:000004">
    <property type="entry name" value="Zinc finger and SCAN domain containing 4"/>
    <property type="match status" value="1"/>
</dbReference>
<dbReference type="FunFam" id="3.30.160.60:FF:001615">
    <property type="entry name" value="Zinc finger and SCAN domain containing 4"/>
    <property type="match status" value="1"/>
</dbReference>
<dbReference type="FunFam" id="3.30.160.60:FF:001779">
    <property type="entry name" value="Zinc finger and SCAN domain containing 4"/>
    <property type="match status" value="1"/>
</dbReference>
<dbReference type="FunFam" id="3.30.160.60:FF:001992">
    <property type="entry name" value="Zinc finger and SCAN domain-containing protein 4"/>
    <property type="match status" value="1"/>
</dbReference>
<dbReference type="FunFam" id="3.30.160.60:FF:000358">
    <property type="entry name" value="zinc finger protein 24"/>
    <property type="match status" value="1"/>
</dbReference>
<dbReference type="Gene3D" id="3.30.160.60">
    <property type="entry name" value="Classic Zinc Finger"/>
    <property type="match status" value="4"/>
</dbReference>
<dbReference type="Gene3D" id="1.10.4020.10">
    <property type="entry name" value="DNA breaking-rejoining enzymes"/>
    <property type="match status" value="1"/>
</dbReference>
<dbReference type="InterPro" id="IPR003309">
    <property type="entry name" value="SCAN_dom"/>
</dbReference>
<dbReference type="InterPro" id="IPR038269">
    <property type="entry name" value="SCAN_sf"/>
</dbReference>
<dbReference type="InterPro" id="IPR036236">
    <property type="entry name" value="Znf_C2H2_sf"/>
</dbReference>
<dbReference type="InterPro" id="IPR013087">
    <property type="entry name" value="Znf_C2H2_type"/>
</dbReference>
<dbReference type="PANTHER" id="PTHR23235">
    <property type="entry name" value="KRUEPPEL-LIKE TRANSCRIPTION FACTOR"/>
    <property type="match status" value="1"/>
</dbReference>
<dbReference type="PANTHER" id="PTHR23235:SF142">
    <property type="entry name" value="ZINC FINGER PROTEIN 384"/>
    <property type="match status" value="1"/>
</dbReference>
<dbReference type="Pfam" id="PF02023">
    <property type="entry name" value="SCAN"/>
    <property type="match status" value="1"/>
</dbReference>
<dbReference type="Pfam" id="PF00096">
    <property type="entry name" value="zf-C2H2"/>
    <property type="match status" value="4"/>
</dbReference>
<dbReference type="SMART" id="SM00431">
    <property type="entry name" value="SCAN"/>
    <property type="match status" value="1"/>
</dbReference>
<dbReference type="SMART" id="SM00355">
    <property type="entry name" value="ZnF_C2H2"/>
    <property type="match status" value="4"/>
</dbReference>
<dbReference type="SUPFAM" id="SSF57667">
    <property type="entry name" value="beta-beta-alpha zinc fingers"/>
    <property type="match status" value="2"/>
</dbReference>
<dbReference type="SUPFAM" id="SSF47353">
    <property type="entry name" value="Retrovirus capsid dimerization domain-like"/>
    <property type="match status" value="1"/>
</dbReference>
<dbReference type="PROSITE" id="PS50804">
    <property type="entry name" value="SCAN_BOX"/>
    <property type="match status" value="1"/>
</dbReference>
<dbReference type="PROSITE" id="PS00028">
    <property type="entry name" value="ZINC_FINGER_C2H2_1"/>
    <property type="match status" value="4"/>
</dbReference>
<dbReference type="PROSITE" id="PS50157">
    <property type="entry name" value="ZINC_FINGER_C2H2_2"/>
    <property type="match status" value="4"/>
</dbReference>
<name>ZSCA4_HUMAN</name>
<reference key="1">
    <citation type="journal article" date="2004" name="Nat. Genet.">
        <title>Complete sequencing and characterization of 21,243 full-length human cDNAs.</title>
        <authorList>
            <person name="Ota T."/>
            <person name="Suzuki Y."/>
            <person name="Nishikawa T."/>
            <person name="Otsuki T."/>
            <person name="Sugiyama T."/>
            <person name="Irie R."/>
            <person name="Wakamatsu A."/>
            <person name="Hayashi K."/>
            <person name="Sato H."/>
            <person name="Nagai K."/>
            <person name="Kimura K."/>
            <person name="Makita H."/>
            <person name="Sekine M."/>
            <person name="Obayashi M."/>
            <person name="Nishi T."/>
            <person name="Shibahara T."/>
            <person name="Tanaka T."/>
            <person name="Ishii S."/>
            <person name="Yamamoto J."/>
            <person name="Saito K."/>
            <person name="Kawai Y."/>
            <person name="Isono Y."/>
            <person name="Nakamura Y."/>
            <person name="Nagahari K."/>
            <person name="Murakami K."/>
            <person name="Yasuda T."/>
            <person name="Iwayanagi T."/>
            <person name="Wagatsuma M."/>
            <person name="Shiratori A."/>
            <person name="Sudo H."/>
            <person name="Hosoiri T."/>
            <person name="Kaku Y."/>
            <person name="Kodaira H."/>
            <person name="Kondo H."/>
            <person name="Sugawara M."/>
            <person name="Takahashi M."/>
            <person name="Kanda K."/>
            <person name="Yokoi T."/>
            <person name="Furuya T."/>
            <person name="Kikkawa E."/>
            <person name="Omura Y."/>
            <person name="Abe K."/>
            <person name="Kamihara K."/>
            <person name="Katsuta N."/>
            <person name="Sato K."/>
            <person name="Tanikawa M."/>
            <person name="Yamazaki M."/>
            <person name="Ninomiya K."/>
            <person name="Ishibashi T."/>
            <person name="Yamashita H."/>
            <person name="Murakawa K."/>
            <person name="Fujimori K."/>
            <person name="Tanai H."/>
            <person name="Kimata M."/>
            <person name="Watanabe M."/>
            <person name="Hiraoka S."/>
            <person name="Chiba Y."/>
            <person name="Ishida S."/>
            <person name="Ono Y."/>
            <person name="Takiguchi S."/>
            <person name="Watanabe S."/>
            <person name="Yosida M."/>
            <person name="Hotuta T."/>
            <person name="Kusano J."/>
            <person name="Kanehori K."/>
            <person name="Takahashi-Fujii A."/>
            <person name="Hara H."/>
            <person name="Tanase T.-O."/>
            <person name="Nomura Y."/>
            <person name="Togiya S."/>
            <person name="Komai F."/>
            <person name="Hara R."/>
            <person name="Takeuchi K."/>
            <person name="Arita M."/>
            <person name="Imose N."/>
            <person name="Musashino K."/>
            <person name="Yuuki H."/>
            <person name="Oshima A."/>
            <person name="Sasaki N."/>
            <person name="Aotsuka S."/>
            <person name="Yoshikawa Y."/>
            <person name="Matsunawa H."/>
            <person name="Ichihara T."/>
            <person name="Shiohata N."/>
            <person name="Sano S."/>
            <person name="Moriya S."/>
            <person name="Momiyama H."/>
            <person name="Satoh N."/>
            <person name="Takami S."/>
            <person name="Terashima Y."/>
            <person name="Suzuki O."/>
            <person name="Nakagawa S."/>
            <person name="Senoh A."/>
            <person name="Mizoguchi H."/>
            <person name="Goto Y."/>
            <person name="Shimizu F."/>
            <person name="Wakebe H."/>
            <person name="Hishigaki H."/>
            <person name="Watanabe T."/>
            <person name="Sugiyama A."/>
            <person name="Takemoto M."/>
            <person name="Kawakami B."/>
            <person name="Yamazaki M."/>
            <person name="Watanabe K."/>
            <person name="Kumagai A."/>
            <person name="Itakura S."/>
            <person name="Fukuzumi Y."/>
            <person name="Fujimori Y."/>
            <person name="Komiyama M."/>
            <person name="Tashiro H."/>
            <person name="Tanigami A."/>
            <person name="Fujiwara T."/>
            <person name="Ono T."/>
            <person name="Yamada K."/>
            <person name="Fujii Y."/>
            <person name="Ozaki K."/>
            <person name="Hirao M."/>
            <person name="Ohmori Y."/>
            <person name="Kawabata A."/>
            <person name="Hikiji T."/>
            <person name="Kobatake N."/>
            <person name="Inagaki H."/>
            <person name="Ikema Y."/>
            <person name="Okamoto S."/>
            <person name="Okitani R."/>
            <person name="Kawakami T."/>
            <person name="Noguchi S."/>
            <person name="Itoh T."/>
            <person name="Shigeta K."/>
            <person name="Senba T."/>
            <person name="Matsumura K."/>
            <person name="Nakajima Y."/>
            <person name="Mizuno T."/>
            <person name="Morinaga M."/>
            <person name="Sasaki M."/>
            <person name="Togashi T."/>
            <person name="Oyama M."/>
            <person name="Hata H."/>
            <person name="Watanabe M."/>
            <person name="Komatsu T."/>
            <person name="Mizushima-Sugano J."/>
            <person name="Satoh T."/>
            <person name="Shirai Y."/>
            <person name="Takahashi Y."/>
            <person name="Nakagawa K."/>
            <person name="Okumura K."/>
            <person name="Nagase T."/>
            <person name="Nomura N."/>
            <person name="Kikuchi H."/>
            <person name="Masuho Y."/>
            <person name="Yamashita R."/>
            <person name="Nakai K."/>
            <person name="Yada T."/>
            <person name="Nakamura Y."/>
            <person name="Ohara O."/>
            <person name="Isogai T."/>
            <person name="Sugano S."/>
        </authorList>
    </citation>
    <scope>NUCLEOTIDE SEQUENCE [LARGE SCALE MRNA]</scope>
    <source>
        <tissue>Placenta</tissue>
    </source>
</reference>
<reference key="2">
    <citation type="journal article" date="2004" name="Genome Res.">
        <title>The status, quality, and expansion of the NIH full-length cDNA project: the Mammalian Gene Collection (MGC).</title>
        <authorList>
            <consortium name="The MGC Project Team"/>
        </authorList>
    </citation>
    <scope>NUCLEOTIDE SEQUENCE [LARGE SCALE MRNA]</scope>
    <source>
        <tissue>Cerebellum</tissue>
    </source>
</reference>
<accession>Q8NAM6</accession>
<accession>Q3MIQ2</accession>
<gene>
    <name type="primary">ZSCAN4</name>
    <name type="synonym">ZNF494</name>
</gene>
<organism>
    <name type="scientific">Homo sapiens</name>
    <name type="common">Human</name>
    <dbReference type="NCBI Taxonomy" id="9606"/>
    <lineage>
        <taxon>Eukaryota</taxon>
        <taxon>Metazoa</taxon>
        <taxon>Chordata</taxon>
        <taxon>Craniata</taxon>
        <taxon>Vertebrata</taxon>
        <taxon>Euteleostomi</taxon>
        <taxon>Mammalia</taxon>
        <taxon>Eutheria</taxon>
        <taxon>Euarchontoglires</taxon>
        <taxon>Primates</taxon>
        <taxon>Haplorrhini</taxon>
        <taxon>Catarrhini</taxon>
        <taxon>Hominidae</taxon>
        <taxon>Homo</taxon>
    </lineage>
</organism>
<comment type="function">
    <text evidence="1">Embryonic stem (ES) cell-specific transcription factor required to regulate ES cell pluripotency. Binds telomeres and plays a key role in genomic stability in ES cells by regulating telomere elongation. Acts as an activator of spontaneous telomere sister chromatid exchange (T-SCE) and telomere elongation in undifferentiated ES cells (By similarity).</text>
</comment>
<comment type="interaction">
    <interactant intactId="EBI-7252920">
        <id>Q8NAM6</id>
    </interactant>
    <interactant intactId="EBI-10292696">
        <id>Q96Q77</id>
        <label>CIB3</label>
    </interactant>
    <organismsDiffer>false</organismsDiffer>
    <experiments>3</experiments>
</comment>
<comment type="interaction">
    <interactant intactId="EBI-7252920">
        <id>Q8NAM6</id>
    </interactant>
    <interactant intactId="EBI-10171902">
        <id>P56545-3</id>
        <label>CTBP2</label>
    </interactant>
    <organismsDiffer>false</organismsDiffer>
    <experiments>3</experiments>
</comment>
<comment type="interaction">
    <interactant intactId="EBI-7252920">
        <id>Q8NAM6</id>
    </interactant>
    <interactant intactId="EBI-742102">
        <id>Q8IYI6</id>
        <label>EXOC8</label>
    </interactant>
    <organismsDiffer>false</organismsDiffer>
    <experiments>3</experiments>
</comment>
<comment type="interaction">
    <interactant intactId="EBI-7252920">
        <id>Q8NAM6</id>
    </interactant>
    <interactant intactId="EBI-1752811">
        <id>Q9BQ89</id>
        <label>FAM110A</label>
    </interactant>
    <organismsDiffer>false</organismsDiffer>
    <experiments>3</experiments>
</comment>
<comment type="interaction">
    <interactant intactId="EBI-7252920">
        <id>Q8NAM6</id>
    </interactant>
    <interactant intactId="EBI-2339359">
        <id>O14929</id>
        <label>HAT1</label>
    </interactant>
    <organismsDiffer>false</organismsDiffer>
    <experiments>3</experiments>
</comment>
<comment type="interaction">
    <interactant intactId="EBI-7252920">
        <id>Q8NAM6</id>
    </interactant>
    <interactant intactId="EBI-9834454">
        <id>P08631-2</id>
        <label>HCK</label>
    </interactant>
    <organismsDiffer>false</organismsDiffer>
    <experiments>3</experiments>
</comment>
<comment type="interaction">
    <interactant intactId="EBI-7252920">
        <id>Q8NAM6</id>
    </interactant>
    <interactant intactId="EBI-399080">
        <id>Q92993</id>
        <label>KAT5</label>
    </interactant>
    <organismsDiffer>false</organismsDiffer>
    <experiments>3</experiments>
</comment>
<comment type="interaction">
    <interactant intactId="EBI-7252920">
        <id>Q8NAM6</id>
    </interactant>
    <interactant intactId="EBI-1038192">
        <id>Q9UHA4</id>
        <label>LAMTOR3</label>
    </interactant>
    <organismsDiffer>false</organismsDiffer>
    <experiments>3</experiments>
</comment>
<comment type="interaction">
    <interactant intactId="EBI-7252920">
        <id>Q8NAM6</id>
    </interactant>
    <interactant intactId="EBI-295391">
        <id>Q9BYG5</id>
        <label>PARD6B</label>
    </interactant>
    <organismsDiffer>false</organismsDiffer>
    <experiments>3</experiments>
</comment>
<comment type="interaction">
    <interactant intactId="EBI-7252920">
        <id>Q8NAM6</id>
    </interactant>
    <interactant intactId="EBI-8787464">
        <id>Q9NU19</id>
        <label>TBC1D22B</label>
    </interactant>
    <organismsDiffer>false</organismsDiffer>
    <experiments>3</experiments>
</comment>
<comment type="interaction">
    <interactant intactId="EBI-7252920">
        <id>Q8NAM6</id>
    </interactant>
    <interactant intactId="EBI-357631">
        <id>Q13114</id>
        <label>TRAF3</label>
    </interactant>
    <organismsDiffer>false</organismsDiffer>
    <experiments>3</experiments>
</comment>
<comment type="subcellular location">
    <subcellularLocation>
        <location evidence="3">Nucleus</location>
    </subcellularLocation>
    <subcellularLocation>
        <location evidence="1">Chromosome</location>
        <location evidence="1">Telomere</location>
    </subcellularLocation>
</comment>